<keyword id="KW-0413">Isomerase</keyword>
<keyword id="KW-0479">Metal-binding</keyword>
<keyword id="KW-0520">NAD</keyword>
<keyword id="KW-0521">NADP</keyword>
<keyword id="KW-0547">Nucleotide-binding</keyword>
<keyword id="KW-0630">Potassium</keyword>
<organism>
    <name type="scientific">Clavibacter sepedonicus</name>
    <name type="common">Clavibacter michiganensis subsp. sepedonicus</name>
    <dbReference type="NCBI Taxonomy" id="31964"/>
    <lineage>
        <taxon>Bacteria</taxon>
        <taxon>Bacillati</taxon>
        <taxon>Actinomycetota</taxon>
        <taxon>Actinomycetes</taxon>
        <taxon>Micrococcales</taxon>
        <taxon>Microbacteriaceae</taxon>
        <taxon>Clavibacter</taxon>
    </lineage>
</organism>
<protein>
    <recommendedName>
        <fullName evidence="1">NAD(P)H-hydrate epimerase</fullName>
        <ecNumber evidence="1">5.1.99.6</ecNumber>
    </recommendedName>
    <alternativeName>
        <fullName evidence="1">NAD(P)HX epimerase</fullName>
    </alternativeName>
</protein>
<feature type="chain" id="PRO_0000416350" description="NAD(P)H-hydrate epimerase">
    <location>
        <begin position="1"/>
        <end position="229"/>
    </location>
</feature>
<feature type="domain" description="YjeF N-terminal" evidence="1">
    <location>
        <begin position="11"/>
        <end position="222"/>
    </location>
</feature>
<feature type="binding site" evidence="1">
    <location>
        <begin position="59"/>
        <end position="63"/>
    </location>
    <ligand>
        <name>(6S)-NADPHX</name>
        <dbReference type="ChEBI" id="CHEBI:64076"/>
    </ligand>
</feature>
<feature type="binding site" evidence="1">
    <location>
        <position position="60"/>
    </location>
    <ligand>
        <name>K(+)</name>
        <dbReference type="ChEBI" id="CHEBI:29103"/>
    </ligand>
</feature>
<feature type="binding site" evidence="1">
    <location>
        <position position="124"/>
    </location>
    <ligand>
        <name>K(+)</name>
        <dbReference type="ChEBI" id="CHEBI:29103"/>
    </ligand>
</feature>
<feature type="binding site" evidence="1">
    <location>
        <begin position="128"/>
        <end position="136"/>
    </location>
    <ligand>
        <name>(6S)-NADPHX</name>
        <dbReference type="ChEBI" id="CHEBI:64076"/>
    </ligand>
</feature>
<feature type="binding site" evidence="1">
    <location>
        <position position="164"/>
    </location>
    <ligand>
        <name>(6S)-NADPHX</name>
        <dbReference type="ChEBI" id="CHEBI:64076"/>
    </ligand>
</feature>
<feature type="binding site" evidence="1">
    <location>
        <position position="167"/>
    </location>
    <ligand>
        <name>K(+)</name>
        <dbReference type="ChEBI" id="CHEBI:29103"/>
    </ligand>
</feature>
<reference key="1">
    <citation type="journal article" date="2008" name="J. Bacteriol.">
        <title>Genome of the actinomycete plant pathogen Clavibacter michiganensis subsp. sepedonicus suggests recent niche adaptation.</title>
        <authorList>
            <person name="Bentley S.D."/>
            <person name="Corton C."/>
            <person name="Brown S.E."/>
            <person name="Barron A."/>
            <person name="Clark L."/>
            <person name="Doggett J."/>
            <person name="Harris B."/>
            <person name="Ormond D."/>
            <person name="Quail M.A."/>
            <person name="May G."/>
            <person name="Francis D."/>
            <person name="Knudson D."/>
            <person name="Parkhill J."/>
            <person name="Ishimaru C.A."/>
        </authorList>
    </citation>
    <scope>NUCLEOTIDE SEQUENCE [LARGE SCALE GENOMIC DNA]</scope>
    <source>
        <strain>ATCC 33113 / DSM 20744 / JCM 9667 / LMG 2889 / ICMP 2535 / C-1</strain>
    </source>
</reference>
<sequence>MSETGSIADGYAAADIRAAEAPLLAAGAQLMRVAAAGLARVCRAEAPSGPVLVLVGAGNNGGDALLAAADLARDGRDVRVIRTASRIHGAAARAAEAGVPITPAEELDDAEVAALARASALVVDGILGIGTTASPALRGEARRVVAALLPVILGAGGPVVVACDIPSGVGCDDGQVPDPTVLSADVTVTFGAGKPGLMRGPGRALAGRVELVDVGLDLSGATPVARAAR</sequence>
<comment type="function">
    <text evidence="1">Catalyzes the epimerization of the S- and R-forms of NAD(P)HX, a damaged form of NAD(P)H that is a result of enzymatic or heat-dependent hydration. This is a prerequisite for the S-specific NAD(P)H-hydrate dehydratase to allow the repair of both epimers of NAD(P)HX.</text>
</comment>
<comment type="catalytic activity">
    <reaction evidence="1">
        <text>(6R)-NADHX = (6S)-NADHX</text>
        <dbReference type="Rhea" id="RHEA:32215"/>
        <dbReference type="ChEBI" id="CHEBI:64074"/>
        <dbReference type="ChEBI" id="CHEBI:64075"/>
        <dbReference type="EC" id="5.1.99.6"/>
    </reaction>
</comment>
<comment type="catalytic activity">
    <reaction evidence="1">
        <text>(6R)-NADPHX = (6S)-NADPHX</text>
        <dbReference type="Rhea" id="RHEA:32227"/>
        <dbReference type="ChEBI" id="CHEBI:64076"/>
        <dbReference type="ChEBI" id="CHEBI:64077"/>
        <dbReference type="EC" id="5.1.99.6"/>
    </reaction>
</comment>
<comment type="cofactor">
    <cofactor evidence="1">
        <name>K(+)</name>
        <dbReference type="ChEBI" id="CHEBI:29103"/>
    </cofactor>
    <text evidence="1">Binds 1 potassium ion per subunit.</text>
</comment>
<comment type="similarity">
    <text evidence="1">Belongs to the NnrE/AIBP family.</text>
</comment>
<gene>
    <name evidence="1" type="primary">nnrE</name>
    <name type="ordered locus">CMS1302</name>
</gene>
<evidence type="ECO:0000255" key="1">
    <source>
        <dbReference type="HAMAP-Rule" id="MF_01966"/>
    </source>
</evidence>
<name>NNRE_CLASE</name>
<dbReference type="EC" id="5.1.99.6" evidence="1"/>
<dbReference type="EMBL" id="AM849034">
    <property type="protein sequence ID" value="CAQ01415.1"/>
    <property type="molecule type" value="Genomic_DNA"/>
</dbReference>
<dbReference type="RefSeq" id="WP_012298687.1">
    <property type="nucleotide sequence ID" value="NC_010407.1"/>
</dbReference>
<dbReference type="SMR" id="B0RHY9"/>
<dbReference type="STRING" id="31964.CMS1302"/>
<dbReference type="KEGG" id="cms:CMS1302"/>
<dbReference type="eggNOG" id="COG0062">
    <property type="taxonomic scope" value="Bacteria"/>
</dbReference>
<dbReference type="HOGENOM" id="CLU_024853_0_2_11"/>
<dbReference type="OrthoDB" id="9806925at2"/>
<dbReference type="Proteomes" id="UP000001318">
    <property type="component" value="Chromosome"/>
</dbReference>
<dbReference type="GO" id="GO:0046872">
    <property type="term" value="F:metal ion binding"/>
    <property type="evidence" value="ECO:0007669"/>
    <property type="project" value="UniProtKB-KW"/>
</dbReference>
<dbReference type="GO" id="GO:0052856">
    <property type="term" value="F:NAD(P)HX epimerase activity"/>
    <property type="evidence" value="ECO:0007669"/>
    <property type="project" value="UniProtKB-UniRule"/>
</dbReference>
<dbReference type="GO" id="GO:0000166">
    <property type="term" value="F:nucleotide binding"/>
    <property type="evidence" value="ECO:0007669"/>
    <property type="project" value="UniProtKB-KW"/>
</dbReference>
<dbReference type="Gene3D" id="3.40.50.10260">
    <property type="entry name" value="YjeF N-terminal domain"/>
    <property type="match status" value="1"/>
</dbReference>
<dbReference type="HAMAP" id="MF_01966">
    <property type="entry name" value="NADHX_epimerase"/>
    <property type="match status" value="1"/>
</dbReference>
<dbReference type="InterPro" id="IPR004443">
    <property type="entry name" value="YjeF_N_dom"/>
</dbReference>
<dbReference type="InterPro" id="IPR036652">
    <property type="entry name" value="YjeF_N_dom_sf"/>
</dbReference>
<dbReference type="NCBIfam" id="TIGR00197">
    <property type="entry name" value="yjeF_nterm"/>
    <property type="match status" value="1"/>
</dbReference>
<dbReference type="Pfam" id="PF03853">
    <property type="entry name" value="YjeF_N"/>
    <property type="match status" value="1"/>
</dbReference>
<dbReference type="SUPFAM" id="SSF64153">
    <property type="entry name" value="YjeF N-terminal domain-like"/>
    <property type="match status" value="1"/>
</dbReference>
<dbReference type="PROSITE" id="PS51385">
    <property type="entry name" value="YJEF_N"/>
    <property type="match status" value="1"/>
</dbReference>
<accession>B0RHY9</accession>
<proteinExistence type="inferred from homology"/>